<protein>
    <recommendedName>
        <fullName evidence="1">4-hydroxy-3-methylbut-2-enyl diphosphate reductase</fullName>
        <shortName evidence="1">HMBPP reductase</shortName>
        <ecNumber evidence="1">1.17.7.4</ecNumber>
    </recommendedName>
</protein>
<sequence>MEIIKISPRGYCYGVIDAMVIAKNASLDPNLPRPIHILGMIVHNKHVTDAFESIGIYTVDGANREEILDKITTGTVIFTAHGVSPSVKAKAAAKGLTTIDATCPDVLHTYNLILEKQAAGYEIIYIGKKGHPEPEGAYGTAPDVVHLVETKADIDALSLLSDNIFVTNQTTMSKWDVADLMDYIKEKFPKAIQHQEICMATQVRQEAVAVQAKGADLTIVVGDPRSNNTARLAQVSIEKAGTKAYRIADITELDIEWIKDAKKVAVTAGASTPTQLVREVLLFLEQFDAADKTTWKRAHNKDFERILPKMKNKYMAEKRRQRLAHLKNGGS</sequence>
<dbReference type="EC" id="1.17.7.4" evidence="1"/>
<dbReference type="EMBL" id="AE017262">
    <property type="protein sequence ID" value="AAT04245.1"/>
    <property type="molecule type" value="Genomic_DNA"/>
</dbReference>
<dbReference type="RefSeq" id="WP_003727433.1">
    <property type="nucleotide sequence ID" value="NC_002973.6"/>
</dbReference>
<dbReference type="SMR" id="Q71ZL9"/>
<dbReference type="KEGG" id="lmf:LMOf2365_1470"/>
<dbReference type="HOGENOM" id="CLU_027486_0_0_9"/>
<dbReference type="UniPathway" id="UPA00056">
    <property type="reaction ID" value="UER00097"/>
</dbReference>
<dbReference type="UniPathway" id="UPA00059">
    <property type="reaction ID" value="UER00105"/>
</dbReference>
<dbReference type="GO" id="GO:0051539">
    <property type="term" value="F:4 iron, 4 sulfur cluster binding"/>
    <property type="evidence" value="ECO:0007669"/>
    <property type="project" value="UniProtKB-UniRule"/>
</dbReference>
<dbReference type="GO" id="GO:0051745">
    <property type="term" value="F:4-hydroxy-3-methylbut-2-enyl diphosphate reductase activity"/>
    <property type="evidence" value="ECO:0007669"/>
    <property type="project" value="UniProtKB-UniRule"/>
</dbReference>
<dbReference type="GO" id="GO:0046872">
    <property type="term" value="F:metal ion binding"/>
    <property type="evidence" value="ECO:0007669"/>
    <property type="project" value="UniProtKB-KW"/>
</dbReference>
<dbReference type="GO" id="GO:0050992">
    <property type="term" value="P:dimethylallyl diphosphate biosynthetic process"/>
    <property type="evidence" value="ECO:0007669"/>
    <property type="project" value="UniProtKB-UniRule"/>
</dbReference>
<dbReference type="GO" id="GO:0019288">
    <property type="term" value="P:isopentenyl diphosphate biosynthetic process, methylerythritol 4-phosphate pathway"/>
    <property type="evidence" value="ECO:0007669"/>
    <property type="project" value="UniProtKB-UniRule"/>
</dbReference>
<dbReference type="GO" id="GO:0016114">
    <property type="term" value="P:terpenoid biosynthetic process"/>
    <property type="evidence" value="ECO:0007669"/>
    <property type="project" value="UniProtKB-UniRule"/>
</dbReference>
<dbReference type="CDD" id="cd13944">
    <property type="entry name" value="lytB_ispH"/>
    <property type="match status" value="1"/>
</dbReference>
<dbReference type="Gene3D" id="3.40.50.11270">
    <property type="match status" value="1"/>
</dbReference>
<dbReference type="Gene3D" id="3.40.1010.20">
    <property type="entry name" value="4-hydroxy-3-methylbut-2-enyl diphosphate reductase, catalytic domain"/>
    <property type="match status" value="2"/>
</dbReference>
<dbReference type="HAMAP" id="MF_00191">
    <property type="entry name" value="IspH"/>
    <property type="match status" value="1"/>
</dbReference>
<dbReference type="InterPro" id="IPR003451">
    <property type="entry name" value="LytB/IspH"/>
</dbReference>
<dbReference type="NCBIfam" id="TIGR00216">
    <property type="entry name" value="ispH_lytB"/>
    <property type="match status" value="1"/>
</dbReference>
<dbReference type="NCBIfam" id="NF002187">
    <property type="entry name" value="PRK01045.1-1"/>
    <property type="match status" value="1"/>
</dbReference>
<dbReference type="PANTHER" id="PTHR30426">
    <property type="entry name" value="4-HYDROXY-3-METHYLBUT-2-ENYL DIPHOSPHATE REDUCTASE"/>
    <property type="match status" value="1"/>
</dbReference>
<dbReference type="PANTHER" id="PTHR30426:SF0">
    <property type="entry name" value="4-HYDROXY-3-METHYLBUT-2-ENYL DIPHOSPHATE REDUCTASE"/>
    <property type="match status" value="1"/>
</dbReference>
<dbReference type="Pfam" id="PF02401">
    <property type="entry name" value="LYTB"/>
    <property type="match status" value="1"/>
</dbReference>
<feature type="chain" id="PRO_0000128832" description="4-hydroxy-3-methylbut-2-enyl diphosphate reductase">
    <location>
        <begin position="1"/>
        <end position="331"/>
    </location>
</feature>
<feature type="active site" description="Proton donor" evidence="1">
    <location>
        <position position="133"/>
    </location>
</feature>
<feature type="binding site" evidence="1">
    <location>
        <position position="12"/>
    </location>
    <ligand>
        <name>[4Fe-4S] cluster</name>
        <dbReference type="ChEBI" id="CHEBI:49883"/>
    </ligand>
</feature>
<feature type="binding site" evidence="1">
    <location>
        <position position="43"/>
    </location>
    <ligand>
        <name>(2E)-4-hydroxy-3-methylbut-2-enyl diphosphate</name>
        <dbReference type="ChEBI" id="CHEBI:128753"/>
    </ligand>
</feature>
<feature type="binding site" evidence="1">
    <location>
        <position position="43"/>
    </location>
    <ligand>
        <name>dimethylallyl diphosphate</name>
        <dbReference type="ChEBI" id="CHEBI:57623"/>
    </ligand>
</feature>
<feature type="binding site" evidence="1">
    <location>
        <position position="43"/>
    </location>
    <ligand>
        <name>isopentenyl diphosphate</name>
        <dbReference type="ChEBI" id="CHEBI:128769"/>
    </ligand>
</feature>
<feature type="binding site" evidence="1">
    <location>
        <position position="81"/>
    </location>
    <ligand>
        <name>(2E)-4-hydroxy-3-methylbut-2-enyl diphosphate</name>
        <dbReference type="ChEBI" id="CHEBI:128753"/>
    </ligand>
</feature>
<feature type="binding site" evidence="1">
    <location>
        <position position="81"/>
    </location>
    <ligand>
        <name>dimethylallyl diphosphate</name>
        <dbReference type="ChEBI" id="CHEBI:57623"/>
    </ligand>
</feature>
<feature type="binding site" evidence="1">
    <location>
        <position position="81"/>
    </location>
    <ligand>
        <name>isopentenyl diphosphate</name>
        <dbReference type="ChEBI" id="CHEBI:128769"/>
    </ligand>
</feature>
<feature type="binding site" evidence="1">
    <location>
        <position position="103"/>
    </location>
    <ligand>
        <name>[4Fe-4S] cluster</name>
        <dbReference type="ChEBI" id="CHEBI:49883"/>
    </ligand>
</feature>
<feature type="binding site" evidence="1">
    <location>
        <position position="131"/>
    </location>
    <ligand>
        <name>(2E)-4-hydroxy-3-methylbut-2-enyl diphosphate</name>
        <dbReference type="ChEBI" id="CHEBI:128753"/>
    </ligand>
</feature>
<feature type="binding site" evidence="1">
    <location>
        <position position="131"/>
    </location>
    <ligand>
        <name>dimethylallyl diphosphate</name>
        <dbReference type="ChEBI" id="CHEBI:57623"/>
    </ligand>
</feature>
<feature type="binding site" evidence="1">
    <location>
        <position position="131"/>
    </location>
    <ligand>
        <name>isopentenyl diphosphate</name>
        <dbReference type="ChEBI" id="CHEBI:128769"/>
    </ligand>
</feature>
<feature type="binding site" evidence="1">
    <location>
        <position position="170"/>
    </location>
    <ligand>
        <name>(2E)-4-hydroxy-3-methylbut-2-enyl diphosphate</name>
        <dbReference type="ChEBI" id="CHEBI:128753"/>
    </ligand>
</feature>
<feature type="binding site" evidence="1">
    <location>
        <position position="198"/>
    </location>
    <ligand>
        <name>[4Fe-4S] cluster</name>
        <dbReference type="ChEBI" id="CHEBI:49883"/>
    </ligand>
</feature>
<feature type="binding site" evidence="1">
    <location>
        <position position="226"/>
    </location>
    <ligand>
        <name>(2E)-4-hydroxy-3-methylbut-2-enyl diphosphate</name>
        <dbReference type="ChEBI" id="CHEBI:128753"/>
    </ligand>
</feature>
<feature type="binding site" evidence="1">
    <location>
        <position position="226"/>
    </location>
    <ligand>
        <name>dimethylallyl diphosphate</name>
        <dbReference type="ChEBI" id="CHEBI:57623"/>
    </ligand>
</feature>
<feature type="binding site" evidence="1">
    <location>
        <position position="226"/>
    </location>
    <ligand>
        <name>isopentenyl diphosphate</name>
        <dbReference type="ChEBI" id="CHEBI:128769"/>
    </ligand>
</feature>
<feature type="binding site" evidence="1">
    <location>
        <position position="228"/>
    </location>
    <ligand>
        <name>(2E)-4-hydroxy-3-methylbut-2-enyl diphosphate</name>
        <dbReference type="ChEBI" id="CHEBI:128753"/>
    </ligand>
</feature>
<feature type="binding site" evidence="1">
    <location>
        <position position="228"/>
    </location>
    <ligand>
        <name>dimethylallyl diphosphate</name>
        <dbReference type="ChEBI" id="CHEBI:57623"/>
    </ligand>
</feature>
<feature type="binding site" evidence="1">
    <location>
        <position position="228"/>
    </location>
    <ligand>
        <name>isopentenyl diphosphate</name>
        <dbReference type="ChEBI" id="CHEBI:128769"/>
    </ligand>
</feature>
<feature type="binding site" evidence="1">
    <location>
        <position position="271"/>
    </location>
    <ligand>
        <name>(2E)-4-hydroxy-3-methylbut-2-enyl diphosphate</name>
        <dbReference type="ChEBI" id="CHEBI:128753"/>
    </ligand>
</feature>
<feature type="binding site" evidence="1">
    <location>
        <position position="271"/>
    </location>
    <ligand>
        <name>dimethylallyl diphosphate</name>
        <dbReference type="ChEBI" id="CHEBI:57623"/>
    </ligand>
</feature>
<feature type="binding site" evidence="1">
    <location>
        <position position="271"/>
    </location>
    <ligand>
        <name>isopentenyl diphosphate</name>
        <dbReference type="ChEBI" id="CHEBI:128769"/>
    </ligand>
</feature>
<proteinExistence type="inferred from homology"/>
<evidence type="ECO:0000255" key="1">
    <source>
        <dbReference type="HAMAP-Rule" id="MF_00191"/>
    </source>
</evidence>
<name>ISPH_LISMF</name>
<comment type="function">
    <text evidence="1">Catalyzes the conversion of 1-hydroxy-2-methyl-2-(E)-butenyl 4-diphosphate (HMBPP) into a mixture of isopentenyl diphosphate (IPP) and dimethylallyl diphosphate (DMAPP). Acts in the terminal step of the DOXP/MEP pathway for isoprenoid precursor biosynthesis.</text>
</comment>
<comment type="catalytic activity">
    <reaction evidence="1">
        <text>isopentenyl diphosphate + 2 oxidized [2Fe-2S]-[ferredoxin] + H2O = (2E)-4-hydroxy-3-methylbut-2-enyl diphosphate + 2 reduced [2Fe-2S]-[ferredoxin] + 2 H(+)</text>
        <dbReference type="Rhea" id="RHEA:24488"/>
        <dbReference type="Rhea" id="RHEA-COMP:10000"/>
        <dbReference type="Rhea" id="RHEA-COMP:10001"/>
        <dbReference type="ChEBI" id="CHEBI:15377"/>
        <dbReference type="ChEBI" id="CHEBI:15378"/>
        <dbReference type="ChEBI" id="CHEBI:33737"/>
        <dbReference type="ChEBI" id="CHEBI:33738"/>
        <dbReference type="ChEBI" id="CHEBI:128753"/>
        <dbReference type="ChEBI" id="CHEBI:128769"/>
        <dbReference type="EC" id="1.17.7.4"/>
    </reaction>
</comment>
<comment type="catalytic activity">
    <reaction evidence="1">
        <text>dimethylallyl diphosphate + 2 oxidized [2Fe-2S]-[ferredoxin] + H2O = (2E)-4-hydroxy-3-methylbut-2-enyl diphosphate + 2 reduced [2Fe-2S]-[ferredoxin] + 2 H(+)</text>
        <dbReference type="Rhea" id="RHEA:24825"/>
        <dbReference type="Rhea" id="RHEA-COMP:10000"/>
        <dbReference type="Rhea" id="RHEA-COMP:10001"/>
        <dbReference type="ChEBI" id="CHEBI:15377"/>
        <dbReference type="ChEBI" id="CHEBI:15378"/>
        <dbReference type="ChEBI" id="CHEBI:33737"/>
        <dbReference type="ChEBI" id="CHEBI:33738"/>
        <dbReference type="ChEBI" id="CHEBI:57623"/>
        <dbReference type="ChEBI" id="CHEBI:128753"/>
        <dbReference type="EC" id="1.17.7.4"/>
    </reaction>
</comment>
<comment type="cofactor">
    <cofactor evidence="1">
        <name>[4Fe-4S] cluster</name>
        <dbReference type="ChEBI" id="CHEBI:49883"/>
    </cofactor>
    <text evidence="1">Binds 1 [4Fe-4S] cluster per subunit.</text>
</comment>
<comment type="pathway">
    <text evidence="1">Isoprenoid biosynthesis; dimethylallyl diphosphate biosynthesis; dimethylallyl diphosphate from (2E)-4-hydroxy-3-methylbutenyl diphosphate: step 1/1.</text>
</comment>
<comment type="pathway">
    <text evidence="1">Isoprenoid biosynthesis; isopentenyl diphosphate biosynthesis via DXP pathway; isopentenyl diphosphate from 1-deoxy-D-xylulose 5-phosphate: step 6/6.</text>
</comment>
<comment type="similarity">
    <text evidence="1">Belongs to the IspH family.</text>
</comment>
<gene>
    <name evidence="1" type="primary">ispH</name>
    <name type="ordered locus">LMOf2365_1470</name>
</gene>
<keyword id="KW-0004">4Fe-4S</keyword>
<keyword id="KW-0408">Iron</keyword>
<keyword id="KW-0411">Iron-sulfur</keyword>
<keyword id="KW-0414">Isoprene biosynthesis</keyword>
<keyword id="KW-0479">Metal-binding</keyword>
<keyword id="KW-0560">Oxidoreductase</keyword>
<organism>
    <name type="scientific">Listeria monocytogenes serotype 4b (strain F2365)</name>
    <dbReference type="NCBI Taxonomy" id="265669"/>
    <lineage>
        <taxon>Bacteria</taxon>
        <taxon>Bacillati</taxon>
        <taxon>Bacillota</taxon>
        <taxon>Bacilli</taxon>
        <taxon>Bacillales</taxon>
        <taxon>Listeriaceae</taxon>
        <taxon>Listeria</taxon>
    </lineage>
</organism>
<accession>Q71ZL9</accession>
<reference key="1">
    <citation type="journal article" date="2004" name="Nucleic Acids Res.">
        <title>Whole genome comparisons of serotype 4b and 1/2a strains of the food-borne pathogen Listeria monocytogenes reveal new insights into the core genome components of this species.</title>
        <authorList>
            <person name="Nelson K.E."/>
            <person name="Fouts D.E."/>
            <person name="Mongodin E.F."/>
            <person name="Ravel J."/>
            <person name="DeBoy R.T."/>
            <person name="Kolonay J.F."/>
            <person name="Rasko D.A."/>
            <person name="Angiuoli S.V."/>
            <person name="Gill S.R."/>
            <person name="Paulsen I.T."/>
            <person name="Peterson J.D."/>
            <person name="White O."/>
            <person name="Nelson W.C."/>
            <person name="Nierman W.C."/>
            <person name="Beanan M.J."/>
            <person name="Brinkac L.M."/>
            <person name="Daugherty S.C."/>
            <person name="Dodson R.J."/>
            <person name="Durkin A.S."/>
            <person name="Madupu R."/>
            <person name="Haft D.H."/>
            <person name="Selengut J."/>
            <person name="Van Aken S.E."/>
            <person name="Khouri H.M."/>
            <person name="Fedorova N."/>
            <person name="Forberger H.A."/>
            <person name="Tran B."/>
            <person name="Kathariou S."/>
            <person name="Wonderling L.D."/>
            <person name="Uhlich G.A."/>
            <person name="Bayles D.O."/>
            <person name="Luchansky J.B."/>
            <person name="Fraser C.M."/>
        </authorList>
    </citation>
    <scope>NUCLEOTIDE SEQUENCE [LARGE SCALE GENOMIC DNA]</scope>
    <source>
        <strain>F2365</strain>
    </source>
</reference>